<proteinExistence type="evidence at protein level"/>
<protein>
    <recommendedName>
        <fullName evidence="2">Bifunctional enzyme IspD/IspF</fullName>
    </recommendedName>
    <domain>
        <recommendedName>
            <fullName evidence="2">2-C-methyl-D-erythritol 4-phosphate cytidylyltransferase</fullName>
            <ecNumber evidence="2">2.7.7.60</ecNumber>
        </recommendedName>
        <alternativeName>
            <fullName evidence="2">4-diphosphocytidyl-2C-methyl-D-erythritol synthase</fullName>
        </alternativeName>
        <alternativeName>
            <fullName evidence="2">MEP cytidylyltransferase</fullName>
            <shortName evidence="2">MCT</shortName>
        </alternativeName>
    </domain>
    <domain>
        <recommendedName>
            <fullName evidence="2">2-C-methyl-D-erythritol 2,4-cyclodiphosphate synthase</fullName>
            <shortName evidence="2">MECDP-synthase</shortName>
            <shortName evidence="2">MECPP-synthase</shortName>
            <shortName evidence="2">MECPS</shortName>
            <ecNumber evidence="2">4.6.1.12</ecNumber>
        </recommendedName>
    </domain>
</protein>
<organism>
    <name type="scientific">Campylobacter jejuni subsp. jejuni serotype O:2 (strain ATCC 700819 / NCTC 11168)</name>
    <dbReference type="NCBI Taxonomy" id="192222"/>
    <lineage>
        <taxon>Bacteria</taxon>
        <taxon>Pseudomonadati</taxon>
        <taxon>Campylobacterota</taxon>
        <taxon>Epsilonproteobacteria</taxon>
        <taxon>Campylobacterales</taxon>
        <taxon>Campylobacteraceae</taxon>
        <taxon>Campylobacter</taxon>
    </lineage>
</organism>
<name>ISPDF_CAMJE</name>
<keyword id="KW-0002">3D-structure</keyword>
<keyword id="KW-0903">Direct protein sequencing</keyword>
<keyword id="KW-0414">Isoprene biosynthesis</keyword>
<keyword id="KW-0456">Lyase</keyword>
<keyword id="KW-0479">Metal-binding</keyword>
<keyword id="KW-0511">Multifunctional enzyme</keyword>
<keyword id="KW-0548">Nucleotidyltransferase</keyword>
<keyword id="KW-1185">Reference proteome</keyword>
<keyword id="KW-0808">Transferase</keyword>
<dbReference type="EC" id="2.7.7.60" evidence="2"/>
<dbReference type="EC" id="4.6.1.12" evidence="2"/>
<dbReference type="EMBL" id="AL111168">
    <property type="protein sequence ID" value="CAL35704.1"/>
    <property type="molecule type" value="Genomic_DNA"/>
</dbReference>
<dbReference type="PIR" id="E81256">
    <property type="entry name" value="E81256"/>
</dbReference>
<dbReference type="RefSeq" id="WP_002851397.1">
    <property type="nucleotide sequence ID" value="NZ_SZUC01000002.1"/>
</dbReference>
<dbReference type="RefSeq" id="YP_002344976.1">
    <property type="nucleotide sequence ID" value="NC_002163.1"/>
</dbReference>
<dbReference type="PDB" id="1W55">
    <property type="method" value="X-ray"/>
    <property type="resolution" value="2.30 A"/>
    <property type="chains" value="A=1-371"/>
</dbReference>
<dbReference type="PDB" id="1W57">
    <property type="method" value="X-ray"/>
    <property type="resolution" value="3.09 A"/>
    <property type="chains" value="A=1-371"/>
</dbReference>
<dbReference type="PDBsum" id="1W55"/>
<dbReference type="PDBsum" id="1W57"/>
<dbReference type="SMR" id="Q9PM68"/>
<dbReference type="IntAct" id="Q9PM68">
    <property type="interactions" value="27"/>
</dbReference>
<dbReference type="STRING" id="192222.Cj1607"/>
<dbReference type="DrugBank" id="DB03403">
    <property type="generic name" value="Cytidine-5'-Monophosphate"/>
</dbReference>
<dbReference type="DrugBank" id="DB02552">
    <property type="generic name" value="Geranyl Diphosphate"/>
</dbReference>
<dbReference type="PaxDb" id="192222-Cj1607"/>
<dbReference type="EnsemblBacteria" id="CAL35704">
    <property type="protein sequence ID" value="CAL35704"/>
    <property type="gene ID" value="Cj1607"/>
</dbReference>
<dbReference type="GeneID" id="905874"/>
<dbReference type="KEGG" id="cje:Cj1607"/>
<dbReference type="PATRIC" id="fig|192222.6.peg.1583"/>
<dbReference type="eggNOG" id="COG0245">
    <property type="taxonomic scope" value="Bacteria"/>
</dbReference>
<dbReference type="eggNOG" id="COG1211">
    <property type="taxonomic scope" value="Bacteria"/>
</dbReference>
<dbReference type="HOGENOM" id="CLU_042800_2_5_7"/>
<dbReference type="OrthoDB" id="9804336at2"/>
<dbReference type="UniPathway" id="UPA00056">
    <property type="reaction ID" value="UER00093"/>
</dbReference>
<dbReference type="UniPathway" id="UPA00056">
    <property type="reaction ID" value="UER00095"/>
</dbReference>
<dbReference type="EvolutionaryTrace" id="Q9PM68"/>
<dbReference type="Proteomes" id="UP000000799">
    <property type="component" value="Chromosome"/>
</dbReference>
<dbReference type="GO" id="GO:0008685">
    <property type="term" value="F:2-C-methyl-D-erythritol 2,4-cyclodiphosphate synthase activity"/>
    <property type="evidence" value="ECO:0007669"/>
    <property type="project" value="UniProtKB-UniRule"/>
</dbReference>
<dbReference type="GO" id="GO:0050518">
    <property type="term" value="F:2-C-methyl-D-erythritol 4-phosphate cytidylyltransferase activity"/>
    <property type="evidence" value="ECO:0007669"/>
    <property type="project" value="UniProtKB-UniRule"/>
</dbReference>
<dbReference type="GO" id="GO:0046872">
    <property type="term" value="F:metal ion binding"/>
    <property type="evidence" value="ECO:0007669"/>
    <property type="project" value="UniProtKB-KW"/>
</dbReference>
<dbReference type="GO" id="GO:0019288">
    <property type="term" value="P:isopentenyl diphosphate biosynthetic process, methylerythritol 4-phosphate pathway"/>
    <property type="evidence" value="ECO:0007669"/>
    <property type="project" value="UniProtKB-UniRule"/>
</dbReference>
<dbReference type="GO" id="GO:0016114">
    <property type="term" value="P:terpenoid biosynthetic process"/>
    <property type="evidence" value="ECO:0007669"/>
    <property type="project" value="InterPro"/>
</dbReference>
<dbReference type="CDD" id="cd02516">
    <property type="entry name" value="CDP-ME_synthetase"/>
    <property type="match status" value="1"/>
</dbReference>
<dbReference type="CDD" id="cd00554">
    <property type="entry name" value="MECDP_synthase"/>
    <property type="match status" value="1"/>
</dbReference>
<dbReference type="Gene3D" id="3.30.1330.50">
    <property type="entry name" value="2-C-methyl-D-erythritol 2,4-cyclodiphosphate synthase"/>
    <property type="match status" value="1"/>
</dbReference>
<dbReference type="Gene3D" id="3.90.550.10">
    <property type="entry name" value="Spore Coat Polysaccharide Biosynthesis Protein SpsA, Chain A"/>
    <property type="match status" value="1"/>
</dbReference>
<dbReference type="HAMAP" id="MF_01520">
    <property type="entry name" value="IspDF"/>
    <property type="match status" value="1"/>
</dbReference>
<dbReference type="HAMAP" id="MF_00107">
    <property type="entry name" value="IspF"/>
    <property type="match status" value="1"/>
</dbReference>
<dbReference type="InterPro" id="IPR001228">
    <property type="entry name" value="IspD"/>
</dbReference>
<dbReference type="InterPro" id="IPR026596">
    <property type="entry name" value="IspD/F"/>
</dbReference>
<dbReference type="InterPro" id="IPR034683">
    <property type="entry name" value="IspD/TarI"/>
</dbReference>
<dbReference type="InterPro" id="IPR018294">
    <property type="entry name" value="ISPD_synthase_CS"/>
</dbReference>
<dbReference type="InterPro" id="IPR003526">
    <property type="entry name" value="MECDP_synthase"/>
</dbReference>
<dbReference type="InterPro" id="IPR020555">
    <property type="entry name" value="MECDP_synthase_CS"/>
</dbReference>
<dbReference type="InterPro" id="IPR036571">
    <property type="entry name" value="MECDP_synthase_sf"/>
</dbReference>
<dbReference type="InterPro" id="IPR029044">
    <property type="entry name" value="Nucleotide-diphossugar_trans"/>
</dbReference>
<dbReference type="NCBIfam" id="TIGR00453">
    <property type="entry name" value="ispD"/>
    <property type="match status" value="1"/>
</dbReference>
<dbReference type="NCBIfam" id="TIGR00151">
    <property type="entry name" value="ispF"/>
    <property type="match status" value="1"/>
</dbReference>
<dbReference type="NCBIfam" id="NF006899">
    <property type="entry name" value="PRK09382.1"/>
    <property type="match status" value="1"/>
</dbReference>
<dbReference type="PANTHER" id="PTHR43181">
    <property type="entry name" value="2-C-METHYL-D-ERYTHRITOL 2,4-CYCLODIPHOSPHATE SYNTHASE, CHLOROPLASTIC"/>
    <property type="match status" value="1"/>
</dbReference>
<dbReference type="PANTHER" id="PTHR43181:SF1">
    <property type="entry name" value="2-C-METHYL-D-ERYTHRITOL 2,4-CYCLODIPHOSPHATE SYNTHASE, CHLOROPLASTIC"/>
    <property type="match status" value="1"/>
</dbReference>
<dbReference type="Pfam" id="PF01128">
    <property type="entry name" value="IspD"/>
    <property type="match status" value="1"/>
</dbReference>
<dbReference type="Pfam" id="PF02542">
    <property type="entry name" value="YgbB"/>
    <property type="match status" value="1"/>
</dbReference>
<dbReference type="SUPFAM" id="SSF69765">
    <property type="entry name" value="IpsF-like"/>
    <property type="match status" value="1"/>
</dbReference>
<dbReference type="SUPFAM" id="SSF53448">
    <property type="entry name" value="Nucleotide-diphospho-sugar transferases"/>
    <property type="match status" value="1"/>
</dbReference>
<dbReference type="PROSITE" id="PS01295">
    <property type="entry name" value="ISPD"/>
    <property type="match status" value="1"/>
</dbReference>
<dbReference type="PROSITE" id="PS01350">
    <property type="entry name" value="ISPF"/>
    <property type="match status" value="1"/>
</dbReference>
<feature type="chain" id="PRO_0000075662" description="Bifunctional enzyme IspD/IspF">
    <location>
        <begin position="1"/>
        <end position="371"/>
    </location>
</feature>
<feature type="region of interest" description="2-C-methyl-D-erythritol 4-phosphate cytidylyltransferase" evidence="2">
    <location>
        <begin position="1"/>
        <end position="210"/>
    </location>
</feature>
<feature type="region of interest" description="2-C-methyl-D-erythritol 2,4-cyclodiphosphate synthase" evidence="2">
    <location>
        <begin position="211"/>
        <end position="371"/>
    </location>
</feature>
<feature type="binding site" evidence="1 2">
    <location>
        <begin position="217"/>
        <end position="219"/>
    </location>
    <ligand>
        <name>4-CDP-2-C-methyl-D-erythritol 2-phosphate</name>
        <dbReference type="ChEBI" id="CHEBI:57919"/>
    </ligand>
</feature>
<feature type="binding site" evidence="1 2">
    <location>
        <position position="217"/>
    </location>
    <ligand>
        <name>a divalent metal cation</name>
        <dbReference type="ChEBI" id="CHEBI:60240"/>
    </ligand>
</feature>
<feature type="binding site" evidence="1 2">
    <location>
        <position position="219"/>
    </location>
    <ligand>
        <name>a divalent metal cation</name>
        <dbReference type="ChEBI" id="CHEBI:60240"/>
    </ligand>
</feature>
<feature type="binding site" evidence="1 2">
    <location>
        <begin position="243"/>
        <end position="244"/>
    </location>
    <ligand>
        <name>4-CDP-2-C-methyl-D-erythritol 2-phosphate</name>
        <dbReference type="ChEBI" id="CHEBI:57919"/>
    </ligand>
</feature>
<feature type="binding site" evidence="1 2">
    <location>
        <position position="251"/>
    </location>
    <ligand>
        <name>a divalent metal cation</name>
        <dbReference type="ChEBI" id="CHEBI:60240"/>
    </ligand>
</feature>
<feature type="binding site" evidence="1 2">
    <location>
        <begin position="265"/>
        <end position="267"/>
    </location>
    <ligand>
        <name>4-CDP-2-C-methyl-D-erythritol 2-phosphate</name>
        <dbReference type="ChEBI" id="CHEBI:57919"/>
    </ligand>
</feature>
<feature type="binding site" evidence="1 2">
    <location>
        <begin position="270"/>
        <end position="274"/>
    </location>
    <ligand>
        <name>4-CDP-2-C-methyl-D-erythritol 2-phosphate</name>
        <dbReference type="ChEBI" id="CHEBI:57919"/>
    </ligand>
</feature>
<feature type="binding site" evidence="1">
    <location>
        <begin position="309"/>
        <end position="315"/>
    </location>
    <ligand>
        <name>4-CDP-2-C-methyl-D-erythritol 2-phosphate</name>
        <dbReference type="ChEBI" id="CHEBI:57919"/>
    </ligand>
</feature>
<feature type="binding site" evidence="1 2">
    <location>
        <begin position="341"/>
        <end position="344"/>
    </location>
    <ligand>
        <name>4-CDP-2-C-methyl-D-erythritol 2-phosphate</name>
        <dbReference type="ChEBI" id="CHEBI:57919"/>
    </ligand>
</feature>
<feature type="binding site" evidence="1 2">
    <location>
        <position position="348"/>
    </location>
    <ligand>
        <name>4-CDP-2-C-methyl-D-erythritol 2-phosphate</name>
        <dbReference type="ChEBI" id="CHEBI:57919"/>
    </ligand>
</feature>
<feature type="binding site" evidence="1 2">
    <location>
        <position position="351"/>
    </location>
    <ligand>
        <name>4-CDP-2-C-methyl-D-erythritol 2-phosphate</name>
        <dbReference type="ChEBI" id="CHEBI:57919"/>
    </ligand>
</feature>
<feature type="site" description="Transition state stabilizer" evidence="2">
    <location>
        <position position="16"/>
    </location>
</feature>
<feature type="site" description="Transition state stabilizer" evidence="2">
    <location>
        <position position="23"/>
    </location>
</feature>
<feature type="site" description="Positions MEP for the nucleophilic attack" evidence="2">
    <location>
        <position position="139"/>
    </location>
</feature>
<feature type="site" description="Positions MEP for the nucleophilic attack" evidence="2">
    <location>
        <position position="191"/>
    </location>
</feature>
<feature type="site" description="Transition state stabilizer" evidence="1 2">
    <location>
        <position position="243"/>
    </location>
</feature>
<feature type="site" description="Transition state stabilizer" evidence="1 2">
    <location>
        <position position="342"/>
    </location>
</feature>
<feature type="strand" evidence="4">
    <location>
        <begin position="4"/>
        <end position="9"/>
    </location>
</feature>
<feature type="turn" evidence="4">
    <location>
        <begin position="15"/>
        <end position="17"/>
    </location>
</feature>
<feature type="strand" evidence="4">
    <location>
        <begin position="19"/>
        <end position="21"/>
    </location>
</feature>
<feature type="helix" evidence="4">
    <location>
        <begin position="23"/>
        <end position="25"/>
    </location>
</feature>
<feature type="strand" evidence="4">
    <location>
        <begin position="27"/>
        <end position="29"/>
    </location>
</feature>
<feature type="helix" evidence="4">
    <location>
        <begin position="33"/>
        <end position="42"/>
    </location>
</feature>
<feature type="strand" evidence="4">
    <location>
        <begin position="50"/>
        <end position="55"/>
    </location>
</feature>
<feature type="helix" evidence="4">
    <location>
        <begin position="57"/>
        <end position="61"/>
    </location>
</feature>
<feature type="strand" evidence="4">
    <location>
        <begin position="65"/>
        <end position="71"/>
    </location>
</feature>
<feature type="helix" evidence="4">
    <location>
        <begin position="76"/>
        <end position="84"/>
    </location>
</feature>
<feature type="strand" evidence="4">
    <location>
        <begin position="89"/>
        <end position="96"/>
    </location>
</feature>
<feature type="helix" evidence="4">
    <location>
        <begin position="104"/>
        <end position="111"/>
    </location>
</feature>
<feature type="helix" evidence="4">
    <location>
        <begin position="112"/>
        <end position="116"/>
    </location>
</feature>
<feature type="strand" evidence="4">
    <location>
        <begin position="118"/>
        <end position="124"/>
    </location>
</feature>
<feature type="strand" evidence="4">
    <location>
        <begin position="130"/>
        <end position="132"/>
    </location>
</feature>
<feature type="strand" evidence="4">
    <location>
        <begin position="135"/>
        <end position="137"/>
    </location>
</feature>
<feature type="helix" evidence="4">
    <location>
        <begin position="139"/>
        <end position="141"/>
    </location>
</feature>
<feature type="strand" evidence="4">
    <location>
        <begin position="149"/>
        <end position="152"/>
    </location>
</feature>
<feature type="helix" evidence="4">
    <location>
        <begin position="153"/>
        <end position="159"/>
    </location>
</feature>
<feature type="helix" evidence="4">
    <location>
        <begin position="169"/>
        <end position="174"/>
    </location>
</feature>
<feature type="turn" evidence="4">
    <location>
        <begin position="175"/>
        <end position="177"/>
    </location>
</feature>
<feature type="strand" evidence="4">
    <location>
        <begin position="180"/>
        <end position="184"/>
    </location>
</feature>
<feature type="helix" evidence="4">
    <location>
        <begin position="187"/>
        <end position="189"/>
    </location>
</feature>
<feature type="helix" evidence="4">
    <location>
        <begin position="195"/>
        <end position="200"/>
    </location>
</feature>
<feature type="strand" evidence="4">
    <location>
        <begin position="210"/>
        <end position="225"/>
    </location>
</feature>
<feature type="strand" evidence="4">
    <location>
        <begin position="227"/>
        <end position="229"/>
    </location>
</feature>
<feature type="strand" evidence="4">
    <location>
        <begin position="232"/>
        <end position="240"/>
    </location>
</feature>
<feature type="strand" evidence="5">
    <location>
        <begin position="243"/>
        <end position="245"/>
    </location>
</feature>
<feature type="helix" evidence="4">
    <location>
        <begin position="248"/>
        <end position="260"/>
    </location>
</feature>
<feature type="helix" evidence="4">
    <location>
        <begin position="266"/>
        <end position="269"/>
    </location>
</feature>
<feature type="strand" evidence="5">
    <location>
        <begin position="272"/>
        <end position="274"/>
    </location>
</feature>
<feature type="turn" evidence="4">
    <location>
        <begin position="276"/>
        <end position="279"/>
    </location>
</feature>
<feature type="helix" evidence="4">
    <location>
        <begin position="282"/>
        <end position="295"/>
    </location>
</feature>
<feature type="strand" evidence="4">
    <location>
        <begin position="298"/>
        <end position="308"/>
    </location>
</feature>
<feature type="strand" evidence="4">
    <location>
        <begin position="310"/>
        <end position="312"/>
    </location>
</feature>
<feature type="helix" evidence="4">
    <location>
        <begin position="315"/>
        <end position="317"/>
    </location>
</feature>
<feature type="helix" evidence="4">
    <location>
        <begin position="318"/>
        <end position="329"/>
    </location>
</feature>
<feature type="helix" evidence="4">
    <location>
        <begin position="333"/>
        <end position="335"/>
    </location>
</feature>
<feature type="strand" evidence="4">
    <location>
        <begin position="336"/>
        <end position="341"/>
    </location>
</feature>
<feature type="helix" evidence="4">
    <location>
        <begin position="347"/>
        <end position="350"/>
    </location>
</feature>
<feature type="strand" evidence="4">
    <location>
        <begin position="353"/>
        <end position="365"/>
    </location>
</feature>
<comment type="function">
    <text evidence="2 3">Bifunctional enzyme that catalyzes the formation of 4-diphosphocytidyl-2-C-methyl-D-erythritol from CTP and 2-C-methyl-D-erythritol 4-phosphate (MEP) (IspD), and catalyzes the conversion of 4-diphosphocytidyl-2-C-methyl-D-erythritol 2-phosphate (CDP-ME2P) to 2-C-methyl-D-erythritol 2,4-cyclodiphosphate (ME-CPP) with a corresponding release of cytidine 5-monophosphate (CMP) (IspF).</text>
</comment>
<comment type="catalytic activity">
    <reaction evidence="2 3">
        <text>2-C-methyl-D-erythritol 4-phosphate + CTP + H(+) = 4-CDP-2-C-methyl-D-erythritol + diphosphate</text>
        <dbReference type="Rhea" id="RHEA:13429"/>
        <dbReference type="ChEBI" id="CHEBI:15378"/>
        <dbReference type="ChEBI" id="CHEBI:33019"/>
        <dbReference type="ChEBI" id="CHEBI:37563"/>
        <dbReference type="ChEBI" id="CHEBI:57823"/>
        <dbReference type="ChEBI" id="CHEBI:58262"/>
        <dbReference type="EC" id="2.7.7.60"/>
    </reaction>
</comment>
<comment type="catalytic activity">
    <reaction evidence="2 3">
        <text>4-CDP-2-C-methyl-D-erythritol 2-phosphate = 2-C-methyl-D-erythritol 2,4-cyclic diphosphate + CMP</text>
        <dbReference type="Rhea" id="RHEA:23864"/>
        <dbReference type="ChEBI" id="CHEBI:57919"/>
        <dbReference type="ChEBI" id="CHEBI:58483"/>
        <dbReference type="ChEBI" id="CHEBI:60377"/>
        <dbReference type="EC" id="4.6.1.12"/>
    </reaction>
</comment>
<comment type="cofactor">
    <cofactor evidence="2 3">
        <name>a divalent metal cation</name>
        <dbReference type="ChEBI" id="CHEBI:60240"/>
    </cofactor>
</comment>
<comment type="pathway">
    <text evidence="2">Isoprenoid biosynthesis; isopentenyl diphosphate biosynthesis via DXP pathway; isopentenyl diphosphate from 1-deoxy-D-xylulose 5-phosphate: step 2/6.</text>
</comment>
<comment type="pathway">
    <text evidence="2">Isoprenoid biosynthesis; isopentenyl diphosphate biosynthesis via DXP pathway; isopentenyl diphosphate from 1-deoxy-D-xylulose 5-phosphate: step 4/6.</text>
</comment>
<comment type="similarity">
    <text evidence="2">In the N-terminal section; belongs to the IspD/TarI cytidylyltransferase family. IspD subfamily.</text>
</comment>
<comment type="similarity">
    <text evidence="2">In the C-terminal section; belongs to the IspF family.</text>
</comment>
<sequence>MSEMSLIMLAAGNSTRFNTKVKKQFLRLGNDPLWLYATKNLSSFYPFKKIVVTSSNITYMKKFTKNYEFIEGGDTRAESLKKALELIDSEFVMVSDVARVLVSKNLFDRLIENLDKADCITPALKVADTTLFDNEALQREKIKLIQTPQISKTKLLKKALDQNLEFTDDSTAIAAMGGKIWFVEGEENARKLTFKEDLKKLDLPTPSFEIFTGNGFDVHEFGENRPLLLAGVQIHPTMGLKAHSDGDVLAHSLTDAILGAAGLGDIGELYPDTDMKFKNANSMELLKQAYDKVREIGFELINIDICVMAQSPKLKDFKQAMQSNIAHTLDLDEFRINVKATTTEKLGFIGRKEGMAVLSSVNLKYFDWTRL</sequence>
<evidence type="ECO:0000250" key="1">
    <source>
        <dbReference type="UniProtKB" id="P62617"/>
    </source>
</evidence>
<evidence type="ECO:0000255" key="2">
    <source>
        <dbReference type="HAMAP-Rule" id="MF_01520"/>
    </source>
</evidence>
<evidence type="ECO:0000269" key="3">
    <source>
    </source>
</evidence>
<evidence type="ECO:0007829" key="4">
    <source>
        <dbReference type="PDB" id="1W55"/>
    </source>
</evidence>
<evidence type="ECO:0007829" key="5">
    <source>
        <dbReference type="PDB" id="1W57"/>
    </source>
</evidence>
<reference key="1">
    <citation type="journal article" date="2000" name="Nature">
        <title>The genome sequence of the food-borne pathogen Campylobacter jejuni reveals hypervariable sequences.</title>
        <authorList>
            <person name="Parkhill J."/>
            <person name="Wren B.W."/>
            <person name="Mungall K.L."/>
            <person name="Ketley J.M."/>
            <person name="Churcher C.M."/>
            <person name="Basham D."/>
            <person name="Chillingworth T."/>
            <person name="Davies R.M."/>
            <person name="Feltwell T."/>
            <person name="Holroyd S."/>
            <person name="Jagels K."/>
            <person name="Karlyshev A.V."/>
            <person name="Moule S."/>
            <person name="Pallen M.J."/>
            <person name="Penn C.W."/>
            <person name="Quail M.A."/>
            <person name="Rajandream M.A."/>
            <person name="Rutherford K.M."/>
            <person name="van Vliet A.H.M."/>
            <person name="Whitehead S."/>
            <person name="Barrell B.G."/>
        </authorList>
    </citation>
    <scope>NUCLEOTIDE SEQUENCE [LARGE SCALE GENOMIC DNA]</scope>
    <source>
        <strain>ATCC 700819 / NCTC 11168</strain>
    </source>
</reference>
<reference key="2">
    <citation type="journal article" date="2004" name="Eur. J. Biochem.">
        <title>Biosynthesis of isoprenoids. A bifunctional IspDF enzyme from Campylobacter jejuni.</title>
        <authorList>
            <person name="Gabrielsen M."/>
            <person name="Rohdich F."/>
            <person name="Eisenreich W."/>
            <person name="Graewert T."/>
            <person name="Hecht S."/>
            <person name="Bacher A."/>
            <person name="Hunter W.N."/>
        </authorList>
    </citation>
    <scope>PROTEIN SEQUENCE OF 1-22</scope>
    <scope>FUNCTION</scope>
    <scope>CATALYTIC ACTIVITY</scope>
    <scope>COFACTOR</scope>
    <scope>IDENTIFICATION BY MASS SPECTROMETRY</scope>
</reference>
<gene>
    <name evidence="2" type="primary">ispDF</name>
    <name type="ordered locus">Cj1607</name>
</gene>
<accession>Q9PM68</accession>
<accession>Q0P821</accession>